<dbReference type="EC" id="6.3.5.2" evidence="1"/>
<dbReference type="EMBL" id="AE017198">
    <property type="protein sequence ID" value="AAS08210.1"/>
    <property type="molecule type" value="Genomic_DNA"/>
</dbReference>
<dbReference type="RefSeq" id="WP_011161419.1">
    <property type="nucleotide sequence ID" value="NC_005362.1"/>
</dbReference>
<dbReference type="SMR" id="Q74LF7"/>
<dbReference type="MEROPS" id="C26.957"/>
<dbReference type="KEGG" id="ljo:LJ_0229"/>
<dbReference type="eggNOG" id="COG0519">
    <property type="taxonomic scope" value="Bacteria"/>
</dbReference>
<dbReference type="HOGENOM" id="CLU_014340_0_5_9"/>
<dbReference type="UniPathway" id="UPA00189">
    <property type="reaction ID" value="UER00296"/>
</dbReference>
<dbReference type="Proteomes" id="UP000000581">
    <property type="component" value="Chromosome"/>
</dbReference>
<dbReference type="GO" id="GO:0005829">
    <property type="term" value="C:cytosol"/>
    <property type="evidence" value="ECO:0007669"/>
    <property type="project" value="TreeGrafter"/>
</dbReference>
<dbReference type="GO" id="GO:0005524">
    <property type="term" value="F:ATP binding"/>
    <property type="evidence" value="ECO:0007669"/>
    <property type="project" value="UniProtKB-UniRule"/>
</dbReference>
<dbReference type="GO" id="GO:0003921">
    <property type="term" value="F:GMP synthase activity"/>
    <property type="evidence" value="ECO:0007669"/>
    <property type="project" value="InterPro"/>
</dbReference>
<dbReference type="CDD" id="cd01742">
    <property type="entry name" value="GATase1_GMP_Synthase"/>
    <property type="match status" value="1"/>
</dbReference>
<dbReference type="CDD" id="cd01997">
    <property type="entry name" value="GMP_synthase_C"/>
    <property type="match status" value="1"/>
</dbReference>
<dbReference type="FunFam" id="3.30.300.10:FF:000002">
    <property type="entry name" value="GMP synthase [glutamine-hydrolyzing]"/>
    <property type="match status" value="1"/>
</dbReference>
<dbReference type="FunFam" id="3.40.50.620:FF:000001">
    <property type="entry name" value="GMP synthase [glutamine-hydrolyzing]"/>
    <property type="match status" value="1"/>
</dbReference>
<dbReference type="FunFam" id="3.40.50.880:FF:000001">
    <property type="entry name" value="GMP synthase [glutamine-hydrolyzing]"/>
    <property type="match status" value="1"/>
</dbReference>
<dbReference type="Gene3D" id="3.30.300.10">
    <property type="match status" value="1"/>
</dbReference>
<dbReference type="Gene3D" id="3.40.50.880">
    <property type="match status" value="1"/>
</dbReference>
<dbReference type="Gene3D" id="3.40.50.620">
    <property type="entry name" value="HUPs"/>
    <property type="match status" value="1"/>
</dbReference>
<dbReference type="HAMAP" id="MF_00344">
    <property type="entry name" value="GMP_synthase"/>
    <property type="match status" value="1"/>
</dbReference>
<dbReference type="InterPro" id="IPR029062">
    <property type="entry name" value="Class_I_gatase-like"/>
</dbReference>
<dbReference type="InterPro" id="IPR017926">
    <property type="entry name" value="GATASE"/>
</dbReference>
<dbReference type="InterPro" id="IPR001674">
    <property type="entry name" value="GMP_synth_C"/>
</dbReference>
<dbReference type="InterPro" id="IPR004739">
    <property type="entry name" value="GMP_synth_GATase"/>
</dbReference>
<dbReference type="InterPro" id="IPR022955">
    <property type="entry name" value="GMP_synthase"/>
</dbReference>
<dbReference type="InterPro" id="IPR025777">
    <property type="entry name" value="GMPS_ATP_PPase_dom"/>
</dbReference>
<dbReference type="InterPro" id="IPR022310">
    <property type="entry name" value="NAD/GMP_synthase"/>
</dbReference>
<dbReference type="InterPro" id="IPR014729">
    <property type="entry name" value="Rossmann-like_a/b/a_fold"/>
</dbReference>
<dbReference type="NCBIfam" id="TIGR00884">
    <property type="entry name" value="guaA_Cterm"/>
    <property type="match status" value="1"/>
</dbReference>
<dbReference type="NCBIfam" id="TIGR00888">
    <property type="entry name" value="guaA_Nterm"/>
    <property type="match status" value="1"/>
</dbReference>
<dbReference type="NCBIfam" id="NF000848">
    <property type="entry name" value="PRK00074.1"/>
    <property type="match status" value="1"/>
</dbReference>
<dbReference type="PANTHER" id="PTHR11922:SF2">
    <property type="entry name" value="GMP SYNTHASE [GLUTAMINE-HYDROLYZING]"/>
    <property type="match status" value="1"/>
</dbReference>
<dbReference type="PANTHER" id="PTHR11922">
    <property type="entry name" value="GMP SYNTHASE-RELATED"/>
    <property type="match status" value="1"/>
</dbReference>
<dbReference type="Pfam" id="PF00117">
    <property type="entry name" value="GATase"/>
    <property type="match status" value="1"/>
</dbReference>
<dbReference type="Pfam" id="PF00958">
    <property type="entry name" value="GMP_synt_C"/>
    <property type="match status" value="1"/>
</dbReference>
<dbReference type="Pfam" id="PF02540">
    <property type="entry name" value="NAD_synthase"/>
    <property type="match status" value="1"/>
</dbReference>
<dbReference type="PRINTS" id="PR00099">
    <property type="entry name" value="CPSGATASE"/>
</dbReference>
<dbReference type="PRINTS" id="PR00096">
    <property type="entry name" value="GATASE"/>
</dbReference>
<dbReference type="SUPFAM" id="SSF52402">
    <property type="entry name" value="Adenine nucleotide alpha hydrolases-like"/>
    <property type="match status" value="1"/>
</dbReference>
<dbReference type="SUPFAM" id="SSF52317">
    <property type="entry name" value="Class I glutamine amidotransferase-like"/>
    <property type="match status" value="1"/>
</dbReference>
<dbReference type="PROSITE" id="PS51273">
    <property type="entry name" value="GATASE_TYPE_1"/>
    <property type="match status" value="1"/>
</dbReference>
<dbReference type="PROSITE" id="PS51553">
    <property type="entry name" value="GMPS_ATP_PPASE"/>
    <property type="match status" value="1"/>
</dbReference>
<proteinExistence type="inferred from homology"/>
<comment type="function">
    <text evidence="1">Catalyzes the synthesis of GMP from XMP.</text>
</comment>
<comment type="catalytic activity">
    <reaction evidence="1">
        <text>XMP + L-glutamine + ATP + H2O = GMP + L-glutamate + AMP + diphosphate + 2 H(+)</text>
        <dbReference type="Rhea" id="RHEA:11680"/>
        <dbReference type="ChEBI" id="CHEBI:15377"/>
        <dbReference type="ChEBI" id="CHEBI:15378"/>
        <dbReference type="ChEBI" id="CHEBI:29985"/>
        <dbReference type="ChEBI" id="CHEBI:30616"/>
        <dbReference type="ChEBI" id="CHEBI:33019"/>
        <dbReference type="ChEBI" id="CHEBI:57464"/>
        <dbReference type="ChEBI" id="CHEBI:58115"/>
        <dbReference type="ChEBI" id="CHEBI:58359"/>
        <dbReference type="ChEBI" id="CHEBI:456215"/>
        <dbReference type="EC" id="6.3.5.2"/>
    </reaction>
</comment>
<comment type="pathway">
    <text evidence="1">Purine metabolism; GMP biosynthesis; GMP from XMP (L-Gln route): step 1/1.</text>
</comment>
<comment type="subunit">
    <text evidence="1">Homodimer.</text>
</comment>
<protein>
    <recommendedName>
        <fullName evidence="1">GMP synthase [glutamine-hydrolyzing]</fullName>
        <ecNumber evidence="1">6.3.5.2</ecNumber>
    </recommendedName>
    <alternativeName>
        <fullName evidence="1">GMP synthetase</fullName>
    </alternativeName>
    <alternativeName>
        <fullName evidence="1">Glutamine amidotransferase</fullName>
    </alternativeName>
</protein>
<sequence>MAKTNLNDFDKIIVLDFGSQYNQLITRRIRDFGIYSELLPHDLSIEKIKEMAPKGIIFSGGPNSVYDKGALKVDPEIFKLGIPILGICYGMQLMSYDLGGKVEKADNSEYGRADIEVIDPNAVLFEGLPREQYVWMSHGDLVTKAPEGFTITAKSKNCPISAIANDEKKFYGIQFHAEVRNSEYGLDILKNFAFKVCGAKANWTMDDFIEMQVDEIRKKVGDKKVILGLSGGVDSSVTATLLHKAIGDQLTAIFVDHGMLRKDEGDQVMQALNKDLGVNIIRVNAQERFLNKLKGVTDPEQKRKIIGKEFIEVFNEEAKKLKDVDFLAQGTLYTDVIESGTNTAQTIKSHHNVGGLPEDMHFELIEPLRKLFKDEVRELGEKLGIPHDLVWRQPFPGPGLGIRVIGEVTEDKLKIVRESDAILREEIKNAGLQEDIWQYFTVLPGIRSVGVMGDGRTYDYTIGIRAVTSIDGMTADFAQIPWDVLSKISTRIVDECDHINRVVYDITSKPPSTIEWE</sequence>
<organism>
    <name type="scientific">Lactobacillus johnsonii (strain CNCM I-12250 / La1 / NCC 533)</name>
    <dbReference type="NCBI Taxonomy" id="257314"/>
    <lineage>
        <taxon>Bacteria</taxon>
        <taxon>Bacillati</taxon>
        <taxon>Bacillota</taxon>
        <taxon>Bacilli</taxon>
        <taxon>Lactobacillales</taxon>
        <taxon>Lactobacillaceae</taxon>
        <taxon>Lactobacillus</taxon>
    </lineage>
</organism>
<keyword id="KW-0067">ATP-binding</keyword>
<keyword id="KW-0315">Glutamine amidotransferase</keyword>
<keyword id="KW-0332">GMP biosynthesis</keyword>
<keyword id="KW-0436">Ligase</keyword>
<keyword id="KW-0547">Nucleotide-binding</keyword>
<keyword id="KW-0658">Purine biosynthesis</keyword>
<evidence type="ECO:0000255" key="1">
    <source>
        <dbReference type="HAMAP-Rule" id="MF_00344"/>
    </source>
</evidence>
<reference key="1">
    <citation type="journal article" date="2004" name="Proc. Natl. Acad. Sci. U.S.A.">
        <title>The genome sequence of the probiotic intestinal bacterium Lactobacillus johnsonii NCC 533.</title>
        <authorList>
            <person name="Pridmore R.D."/>
            <person name="Berger B."/>
            <person name="Desiere F."/>
            <person name="Vilanova D."/>
            <person name="Barretto C."/>
            <person name="Pittet A.-C."/>
            <person name="Zwahlen M.-C."/>
            <person name="Rouvet M."/>
            <person name="Altermann E."/>
            <person name="Barrangou R."/>
            <person name="Mollet B."/>
            <person name="Mercenier A."/>
            <person name="Klaenhammer T."/>
            <person name="Arigoni F."/>
            <person name="Schell M.A."/>
        </authorList>
    </citation>
    <scope>NUCLEOTIDE SEQUENCE [LARGE SCALE GENOMIC DNA]</scope>
    <source>
        <strain>CNCM I-1225 / La1 / NCC 533</strain>
    </source>
</reference>
<name>GUAA_LACJO</name>
<accession>Q74LF7</accession>
<feature type="chain" id="PRO_0000140135" description="GMP synthase [glutamine-hydrolyzing]">
    <location>
        <begin position="1"/>
        <end position="517"/>
    </location>
</feature>
<feature type="domain" description="Glutamine amidotransferase type-1" evidence="1">
    <location>
        <begin position="11"/>
        <end position="202"/>
    </location>
</feature>
<feature type="domain" description="GMPS ATP-PPase" evidence="1">
    <location>
        <begin position="203"/>
        <end position="392"/>
    </location>
</feature>
<feature type="active site" description="Nucleophile" evidence="1">
    <location>
        <position position="88"/>
    </location>
</feature>
<feature type="active site" evidence="1">
    <location>
        <position position="176"/>
    </location>
</feature>
<feature type="active site" evidence="1">
    <location>
        <position position="178"/>
    </location>
</feature>
<feature type="binding site" evidence="1">
    <location>
        <begin position="230"/>
        <end position="236"/>
    </location>
    <ligand>
        <name>ATP</name>
        <dbReference type="ChEBI" id="CHEBI:30616"/>
    </ligand>
</feature>
<gene>
    <name evidence="1" type="primary">guaA</name>
    <name type="ordered locus">LJ_0229</name>
</gene>